<organism>
    <name type="scientific">Eremothecium gossypii (strain ATCC 10895 / CBS 109.51 / FGSC 9923 / NRRL Y-1056)</name>
    <name type="common">Yeast</name>
    <name type="synonym">Ashbya gossypii</name>
    <dbReference type="NCBI Taxonomy" id="284811"/>
    <lineage>
        <taxon>Eukaryota</taxon>
        <taxon>Fungi</taxon>
        <taxon>Dikarya</taxon>
        <taxon>Ascomycota</taxon>
        <taxon>Saccharomycotina</taxon>
        <taxon>Saccharomycetes</taxon>
        <taxon>Saccharomycetales</taxon>
        <taxon>Saccharomycetaceae</taxon>
        <taxon>Eremothecium</taxon>
    </lineage>
</organism>
<gene>
    <name evidence="1" type="primary">MDM34</name>
    <name type="ordered locus">AER442W</name>
</gene>
<name>MDM34_EREGS</name>
<reference key="1">
    <citation type="journal article" date="2004" name="Science">
        <title>The Ashbya gossypii genome as a tool for mapping the ancient Saccharomyces cerevisiae genome.</title>
        <authorList>
            <person name="Dietrich F.S."/>
            <person name="Voegeli S."/>
            <person name="Brachat S."/>
            <person name="Lerch A."/>
            <person name="Gates K."/>
            <person name="Steiner S."/>
            <person name="Mohr C."/>
            <person name="Poehlmann R."/>
            <person name="Luedi P."/>
            <person name="Choi S."/>
            <person name="Wing R.A."/>
            <person name="Flavier A."/>
            <person name="Gaffney T.D."/>
            <person name="Philippsen P."/>
        </authorList>
    </citation>
    <scope>NUCLEOTIDE SEQUENCE [LARGE SCALE GENOMIC DNA]</scope>
    <source>
        <strain>ATCC 10895 / CBS 109.51 / FGSC 9923 / NRRL Y-1056</strain>
    </source>
</reference>
<reference key="2">
    <citation type="journal article" date="2013" name="G3 (Bethesda)">
        <title>Genomes of Ashbya fungi isolated from insects reveal four mating-type loci, numerous translocations, lack of transposons, and distinct gene duplications.</title>
        <authorList>
            <person name="Dietrich F.S."/>
            <person name="Voegeli S."/>
            <person name="Kuo S."/>
            <person name="Philippsen P."/>
        </authorList>
    </citation>
    <scope>GENOME REANNOTATION</scope>
    <source>
        <strain>ATCC 10895 / CBS 109.51 / FGSC 9923 / NRRL Y-1056</strain>
    </source>
</reference>
<dbReference type="EMBL" id="AE016818">
    <property type="protein sequence ID" value="AAS53121.1"/>
    <property type="molecule type" value="Genomic_DNA"/>
</dbReference>
<dbReference type="RefSeq" id="NP_985297.1">
    <property type="nucleotide sequence ID" value="NM_210651.2"/>
</dbReference>
<dbReference type="FunCoup" id="Q755S6">
    <property type="interactions" value="73"/>
</dbReference>
<dbReference type="STRING" id="284811.Q755S6"/>
<dbReference type="EnsemblFungi" id="AAS53121">
    <property type="protein sequence ID" value="AAS53121"/>
    <property type="gene ID" value="AGOS_AER442W"/>
</dbReference>
<dbReference type="GeneID" id="4621517"/>
<dbReference type="KEGG" id="ago:AGOS_AER442W"/>
<dbReference type="eggNOG" id="ENOG502QT3W">
    <property type="taxonomic scope" value="Eukaryota"/>
</dbReference>
<dbReference type="HOGENOM" id="CLU_036329_0_0_1"/>
<dbReference type="InParanoid" id="Q755S6"/>
<dbReference type="OMA" id="PGCLERQ"/>
<dbReference type="OrthoDB" id="17927at2759"/>
<dbReference type="Proteomes" id="UP000000591">
    <property type="component" value="Chromosome V"/>
</dbReference>
<dbReference type="GO" id="GO:0032865">
    <property type="term" value="C:ERMES complex"/>
    <property type="evidence" value="ECO:0000318"/>
    <property type="project" value="GO_Central"/>
</dbReference>
<dbReference type="GO" id="GO:0008289">
    <property type="term" value="F:lipid binding"/>
    <property type="evidence" value="ECO:0007669"/>
    <property type="project" value="UniProtKB-KW"/>
</dbReference>
<dbReference type="GO" id="GO:0000002">
    <property type="term" value="P:mitochondrial genome maintenance"/>
    <property type="evidence" value="ECO:0007669"/>
    <property type="project" value="UniProtKB-UniRule"/>
</dbReference>
<dbReference type="GO" id="GO:0007005">
    <property type="term" value="P:mitochondrion organization"/>
    <property type="evidence" value="ECO:0000318"/>
    <property type="project" value="GO_Central"/>
</dbReference>
<dbReference type="GO" id="GO:1990456">
    <property type="term" value="P:mitochondrion-endoplasmic reticulum membrane tethering"/>
    <property type="evidence" value="ECO:0000318"/>
    <property type="project" value="GO_Central"/>
</dbReference>
<dbReference type="GO" id="GO:0015914">
    <property type="term" value="P:phospholipid transport"/>
    <property type="evidence" value="ECO:0000318"/>
    <property type="project" value="GO_Central"/>
</dbReference>
<dbReference type="HAMAP" id="MF_03105">
    <property type="entry name" value="Mdm34"/>
    <property type="match status" value="1"/>
</dbReference>
<dbReference type="InterPro" id="IPR027536">
    <property type="entry name" value="Mdm34"/>
</dbReference>
<dbReference type="InterPro" id="IPR031468">
    <property type="entry name" value="SMP_LBD"/>
</dbReference>
<dbReference type="PANTHER" id="PTHR28185">
    <property type="entry name" value="MITOCHONDRIAL DISTRIBUTION AND MORPHOLOGY PROTEIN 34"/>
    <property type="match status" value="1"/>
</dbReference>
<dbReference type="PANTHER" id="PTHR28185:SF1">
    <property type="entry name" value="MITOCHONDRIAL DISTRIBUTION AND MORPHOLOGY PROTEIN 34"/>
    <property type="match status" value="1"/>
</dbReference>
<dbReference type="PROSITE" id="PS51847">
    <property type="entry name" value="SMP"/>
    <property type="match status" value="1"/>
</dbReference>
<comment type="function">
    <text evidence="1">Component of the ERMES/MDM complex, which serves as a molecular tether to connect the endoplasmic reticulum (ER) and mitochondria. Components of this complex are involved in the control of mitochondrial shape and protein biogenesis, and function in nonvesicular lipid trafficking between the ER and mitochondria. MDM34 is required for the interaction of the ER-resident membrane protein MMM1 and the outer mitochondrial membrane-resident beta-barrel protein MDM10.</text>
</comment>
<comment type="subunit">
    <text evidence="1">Component of the ER-mitochondria encounter structure (ERMES) or MDM complex, composed of MMM1, MDM10, MDM12 and MDM34.</text>
</comment>
<comment type="subcellular location">
    <subcellularLocation>
        <location evidence="1">Mitochondrion outer membrane</location>
        <topology evidence="1">Multi-pass membrane protein</topology>
    </subcellularLocation>
    <text evidence="1">The ERMES/MDM complex localizes to a few discrete foci (around 10 per single cell), that represent mitochondria-endoplasmic reticulum junctions. These foci are often found next to mtDNA nucleoids.</text>
</comment>
<comment type="domain">
    <text evidence="1">Lacks alpha-helical transmembrane segments, suggesting that it resides in the membrane via beta-sheet conformations similar to those predicted for other outer membrane proteins and porin.</text>
</comment>
<comment type="domain">
    <text evidence="1">The SMP-LTD domain is a barrel-like domain that can bind various types of glycerophospholipids in its interior and mediate their transfer between two adjacent bilayers.</text>
</comment>
<comment type="similarity">
    <text evidence="1">Belongs to the MDM34 family.</text>
</comment>
<protein>
    <recommendedName>
        <fullName evidence="1">Mitochondrial distribution and morphology protein 34</fullName>
    </recommendedName>
</protein>
<keyword id="KW-0445">Lipid transport</keyword>
<keyword id="KW-0446">Lipid-binding</keyword>
<keyword id="KW-0472">Membrane</keyword>
<keyword id="KW-0496">Mitochondrion</keyword>
<keyword id="KW-1000">Mitochondrion outer membrane</keyword>
<keyword id="KW-1185">Reference proteome</keyword>
<keyword id="KW-0812">Transmembrane</keyword>
<keyword id="KW-1134">Transmembrane beta strand</keyword>
<keyword id="KW-0813">Transport</keyword>
<feature type="chain" id="PRO_0000384323" description="Mitochondrial distribution and morphology protein 34">
    <location>
        <begin position="1"/>
        <end position="590"/>
    </location>
</feature>
<feature type="domain" description="SMP-LTD" evidence="1">
    <location>
        <begin position="1"/>
        <end position="225"/>
    </location>
</feature>
<feature type="region of interest" description="Disordered" evidence="2">
    <location>
        <begin position="393"/>
        <end position="456"/>
    </location>
</feature>
<feature type="compositionally biased region" description="Basic residues" evidence="2">
    <location>
        <begin position="393"/>
        <end position="405"/>
    </location>
</feature>
<feature type="compositionally biased region" description="Polar residues" evidence="2">
    <location>
        <begin position="413"/>
        <end position="427"/>
    </location>
</feature>
<accession>Q755S6</accession>
<evidence type="ECO:0000255" key="1">
    <source>
        <dbReference type="HAMAP-Rule" id="MF_03105"/>
    </source>
</evidence>
<evidence type="ECO:0000256" key="2">
    <source>
        <dbReference type="SAM" id="MobiDB-lite"/>
    </source>
</evidence>
<proteinExistence type="inferred from homology"/>
<sequence length="590" mass="65696">MSFIFNRETFEDNSFNEVLREKLMRALNLHDRTVGSSSGAMTTGTGAVECSGAAAAGQRPPRSKGGFSKVDILKSGIIVKKVEFPTIPKLEILDLDVSIQSKSLIKGICKVSCRDAMVQITTEIESNLLLLHVNSSPKFTTPKLISNDSFTVPITMTFDKLHLEAITNIFVKNTGVGISFNDVNLDFRLQCSIKLLQSSIEKRLKASMEEVFKDVLPSVIFNMSQRWFTHGETVVPTVDKSMVSSDTPVQPRMILDESDLSDLSPANMLRLSTLVSSRQTLCLNPTAVDTISTIPGCLERQNLHRFNLRFPSLYNYYSNKEQQGAHNNEKNRVEHLKLWGRSSSNPIPTRASFKVENTLPKEVLDSNSYDVRVITAIQTKMYERASNDVVLRRRKIKMRSRKPSKANKDAVSPAQNDSGTSSCSNVASELPHASLQANPQSDEIDPAPEGGPNAEDAYKEELEDSGLRAPQDFPALENVTPVLAQLPNQQRSRLGSPLSAGRPTPLLSPLDDSHWLLQKRDPQDLRTTLYSPIRNGRFYVMPQPQLDTKEASAFLLENGKRFGFVGLLNNHNLKWGNDPPPPYREVSITQ</sequence>